<comment type="function">
    <text>Involved in oxygen transport from the lung to the various peripheral tissues.</text>
</comment>
<comment type="subunit">
    <text>Heterotetramer of two alpha chains and two beta chains.</text>
</comment>
<comment type="tissue specificity">
    <text>Red blood cells.</text>
</comment>
<comment type="similarity">
    <text evidence="3">Belongs to the globin family.</text>
</comment>
<proteinExistence type="evidence at protein level"/>
<organism>
    <name type="scientific">Antrozous pallidus</name>
    <name type="common">Pallid bat</name>
    <name type="synonym">Vespertilio pallidus</name>
    <dbReference type="NCBI Taxonomy" id="9440"/>
    <lineage>
        <taxon>Eukaryota</taxon>
        <taxon>Metazoa</taxon>
        <taxon>Chordata</taxon>
        <taxon>Craniata</taxon>
        <taxon>Vertebrata</taxon>
        <taxon>Euteleostomi</taxon>
        <taxon>Mammalia</taxon>
        <taxon>Eutheria</taxon>
        <taxon>Laurasiatheria</taxon>
        <taxon>Chiroptera</taxon>
        <taxon>Yangochiroptera</taxon>
        <taxon>Vespertilionidae</taxon>
        <taxon>Antrozous</taxon>
    </lineage>
</organism>
<sequence length="146" mass="15898">VHLTADEKSAVTGLWGKVNVEEVGGEALGRLLVVYPWTQRFFESFGDLSNAGAVMGNAKVKAHGKKVLNAFSDGLKNLDNLKGTFAKLSELHCDKLHVDPENFRLLGNVLMIVLARHFGKEFCPPVQAAFQKVSLGVATALGHKYH</sequence>
<keyword id="KW-0007">Acetylation</keyword>
<keyword id="KW-0903">Direct protein sequencing</keyword>
<keyword id="KW-0349">Heme</keyword>
<keyword id="KW-0408">Iron</keyword>
<keyword id="KW-0479">Metal-binding</keyword>
<keyword id="KW-0561">Oxygen transport</keyword>
<keyword id="KW-0597">Phosphoprotein</keyword>
<keyword id="KW-0702">S-nitrosylation</keyword>
<keyword id="KW-0813">Transport</keyword>
<reference key="1">
    <citation type="journal article" date="1987" name="Biol. Chem. Hoppe-Seyler">
        <title>The primary structure of the pallid bat (Antrozous pallidus, Chiroptera) hemoglobin.</title>
        <authorList>
            <person name="Kleinschmidt T."/>
            <person name="Koop B.F."/>
            <person name="Braunitzer G."/>
        </authorList>
    </citation>
    <scope>PROTEIN SEQUENCE</scope>
</reference>
<evidence type="ECO:0000250" key="1">
    <source>
        <dbReference type="UniProtKB" id="P02086"/>
    </source>
</evidence>
<evidence type="ECO:0000250" key="2">
    <source>
        <dbReference type="UniProtKB" id="P68871"/>
    </source>
</evidence>
<evidence type="ECO:0000255" key="3">
    <source>
        <dbReference type="PROSITE-ProRule" id="PRU00238"/>
    </source>
</evidence>
<accession>P14388</accession>
<dbReference type="PIR" id="B29702">
    <property type="entry name" value="B29702"/>
</dbReference>
<dbReference type="SMR" id="P14388"/>
<dbReference type="GO" id="GO:0072562">
    <property type="term" value="C:blood microparticle"/>
    <property type="evidence" value="ECO:0007669"/>
    <property type="project" value="TreeGrafter"/>
</dbReference>
<dbReference type="GO" id="GO:0031838">
    <property type="term" value="C:haptoglobin-hemoglobin complex"/>
    <property type="evidence" value="ECO:0007669"/>
    <property type="project" value="TreeGrafter"/>
</dbReference>
<dbReference type="GO" id="GO:0005833">
    <property type="term" value="C:hemoglobin complex"/>
    <property type="evidence" value="ECO:0007669"/>
    <property type="project" value="InterPro"/>
</dbReference>
<dbReference type="GO" id="GO:0031720">
    <property type="term" value="F:haptoglobin binding"/>
    <property type="evidence" value="ECO:0007669"/>
    <property type="project" value="TreeGrafter"/>
</dbReference>
<dbReference type="GO" id="GO:0020037">
    <property type="term" value="F:heme binding"/>
    <property type="evidence" value="ECO:0007669"/>
    <property type="project" value="InterPro"/>
</dbReference>
<dbReference type="GO" id="GO:0031721">
    <property type="term" value="F:hemoglobin alpha binding"/>
    <property type="evidence" value="ECO:0007669"/>
    <property type="project" value="TreeGrafter"/>
</dbReference>
<dbReference type="GO" id="GO:0046872">
    <property type="term" value="F:metal ion binding"/>
    <property type="evidence" value="ECO:0007669"/>
    <property type="project" value="UniProtKB-KW"/>
</dbReference>
<dbReference type="GO" id="GO:0043177">
    <property type="term" value="F:organic acid binding"/>
    <property type="evidence" value="ECO:0007669"/>
    <property type="project" value="TreeGrafter"/>
</dbReference>
<dbReference type="GO" id="GO:0019825">
    <property type="term" value="F:oxygen binding"/>
    <property type="evidence" value="ECO:0007669"/>
    <property type="project" value="InterPro"/>
</dbReference>
<dbReference type="GO" id="GO:0005344">
    <property type="term" value="F:oxygen carrier activity"/>
    <property type="evidence" value="ECO:0007669"/>
    <property type="project" value="UniProtKB-KW"/>
</dbReference>
<dbReference type="GO" id="GO:0004601">
    <property type="term" value="F:peroxidase activity"/>
    <property type="evidence" value="ECO:0007669"/>
    <property type="project" value="TreeGrafter"/>
</dbReference>
<dbReference type="GO" id="GO:0042744">
    <property type="term" value="P:hydrogen peroxide catabolic process"/>
    <property type="evidence" value="ECO:0007669"/>
    <property type="project" value="TreeGrafter"/>
</dbReference>
<dbReference type="CDD" id="cd08925">
    <property type="entry name" value="Hb-beta-like"/>
    <property type="match status" value="1"/>
</dbReference>
<dbReference type="FunFam" id="1.10.490.10:FF:000001">
    <property type="entry name" value="Hemoglobin subunit beta"/>
    <property type="match status" value="1"/>
</dbReference>
<dbReference type="Gene3D" id="1.10.490.10">
    <property type="entry name" value="Globins"/>
    <property type="match status" value="1"/>
</dbReference>
<dbReference type="InterPro" id="IPR000971">
    <property type="entry name" value="Globin"/>
</dbReference>
<dbReference type="InterPro" id="IPR009050">
    <property type="entry name" value="Globin-like_sf"/>
</dbReference>
<dbReference type="InterPro" id="IPR012292">
    <property type="entry name" value="Globin/Proto"/>
</dbReference>
<dbReference type="InterPro" id="IPR002337">
    <property type="entry name" value="Hemoglobin_b"/>
</dbReference>
<dbReference type="InterPro" id="IPR050056">
    <property type="entry name" value="Hemoglobin_oxygen_transport"/>
</dbReference>
<dbReference type="PANTHER" id="PTHR11442">
    <property type="entry name" value="HEMOGLOBIN FAMILY MEMBER"/>
    <property type="match status" value="1"/>
</dbReference>
<dbReference type="PANTHER" id="PTHR11442:SF42">
    <property type="entry name" value="HEMOGLOBIN SUBUNIT BETA"/>
    <property type="match status" value="1"/>
</dbReference>
<dbReference type="Pfam" id="PF00042">
    <property type="entry name" value="Globin"/>
    <property type="match status" value="1"/>
</dbReference>
<dbReference type="PRINTS" id="PR00814">
    <property type="entry name" value="BETAHAEM"/>
</dbReference>
<dbReference type="SUPFAM" id="SSF46458">
    <property type="entry name" value="Globin-like"/>
    <property type="match status" value="1"/>
</dbReference>
<dbReference type="PROSITE" id="PS01033">
    <property type="entry name" value="GLOBIN"/>
    <property type="match status" value="1"/>
</dbReference>
<feature type="chain" id="PRO_0000052875" description="Hemoglobin subunit beta">
    <location>
        <begin position="1"/>
        <end position="146"/>
    </location>
</feature>
<feature type="domain" description="Globin" evidence="3">
    <location>
        <begin position="2"/>
        <end position="146"/>
    </location>
</feature>
<feature type="binding site" description="distal binding residue">
    <location>
        <position position="63"/>
    </location>
    <ligand>
        <name>heme b</name>
        <dbReference type="ChEBI" id="CHEBI:60344"/>
    </ligand>
    <ligandPart>
        <name>Fe</name>
        <dbReference type="ChEBI" id="CHEBI:18248"/>
    </ligandPart>
</feature>
<feature type="binding site" description="proximal binding residue">
    <location>
        <position position="92"/>
    </location>
    <ligand>
        <name>heme b</name>
        <dbReference type="ChEBI" id="CHEBI:60344"/>
    </ligand>
    <ligandPart>
        <name>Fe</name>
        <dbReference type="ChEBI" id="CHEBI:18248"/>
    </ligandPart>
</feature>
<feature type="modified residue" description="N-acetylvaline" evidence="1">
    <location>
        <position position="1"/>
    </location>
</feature>
<feature type="modified residue" description="Phosphothreonine" evidence="2">
    <location>
        <position position="12"/>
    </location>
</feature>
<feature type="modified residue" description="Phosphoserine" evidence="2">
    <location>
        <position position="44"/>
    </location>
</feature>
<feature type="modified residue" description="N6-acetyllysine" evidence="2">
    <location>
        <position position="59"/>
    </location>
</feature>
<feature type="modified residue" description="N6-acetyllysine" evidence="2">
    <location>
        <position position="82"/>
    </location>
</feature>
<feature type="modified residue" description="S-nitrosocysteine" evidence="2">
    <location>
        <position position="93"/>
    </location>
</feature>
<feature type="modified residue" description="N6-acetyllysine" evidence="2">
    <location>
        <position position="144"/>
    </location>
</feature>
<protein>
    <recommendedName>
        <fullName>Hemoglobin subunit beta</fullName>
    </recommendedName>
    <alternativeName>
        <fullName>Beta-globin</fullName>
    </alternativeName>
    <alternativeName>
        <fullName>Hemoglobin beta chain</fullName>
    </alternativeName>
</protein>
<gene>
    <name type="primary">HBB</name>
</gene>
<name>HBB_ANTPA</name>